<protein>
    <recommendedName>
        <fullName evidence="1">Betaine aldehyde dehydrogenase</fullName>
        <shortName evidence="1">BADH</shortName>
        <ecNumber evidence="1">1.2.1.8</ecNumber>
    </recommendedName>
</protein>
<name>BETB_BURM7</name>
<sequence>MSVYGLQRLYIAGAHADATSGKTFDTFDPATGELLARVQQASADDVDRAVASAREGQREWAAMTAMQRSRILRRAVELLRERNDALAELEMRDTGKPIAETRAVDIVTGADVIEYYAGLATAIEGLQVPLRPESFVYTRREPLGVCAGIGAWNYPIQIACWKSAPALAAGNAMIFKPSEVTPLSALKLAEIYTEAGVPAGVFNVVQGDGSVGALLSAHPGIAKVSFTGGVETGKKVMSLAGASSLKEVTMELGGKSPLIVFDDADLDRAADIAVTANFFSAGQVCTNGTRVFVQQAVKDAFVERVLARVARIRAGKPSDPDTNFGPLASAAQLDKVLGYIDSGKAEGAKLLAGGARLVNDHFASGQYVAPTVFGDCRDDMRIVREEIFGPVMSILSFETEDEAIARANATDYGLAAGVVTENLSRAHRAIHRLEAGICWINTWGESPAEMPVGGYKQSGVGRENGITTLEHYTRIKSVQVELGRYQPVF</sequence>
<comment type="function">
    <text evidence="1">Involved in the biosynthesis of the osmoprotectant glycine betaine. Catalyzes the irreversible oxidation of betaine aldehyde to the corresponding acid.</text>
</comment>
<comment type="catalytic activity">
    <reaction evidence="1">
        <text>betaine aldehyde + NAD(+) + H2O = glycine betaine + NADH + 2 H(+)</text>
        <dbReference type="Rhea" id="RHEA:15305"/>
        <dbReference type="ChEBI" id="CHEBI:15377"/>
        <dbReference type="ChEBI" id="CHEBI:15378"/>
        <dbReference type="ChEBI" id="CHEBI:15710"/>
        <dbReference type="ChEBI" id="CHEBI:17750"/>
        <dbReference type="ChEBI" id="CHEBI:57540"/>
        <dbReference type="ChEBI" id="CHEBI:57945"/>
        <dbReference type="EC" id="1.2.1.8"/>
    </reaction>
    <physiologicalReaction direction="left-to-right" evidence="1">
        <dbReference type="Rhea" id="RHEA:15306"/>
    </physiologicalReaction>
</comment>
<comment type="cofactor">
    <cofactor evidence="1">
        <name>K(+)</name>
        <dbReference type="ChEBI" id="CHEBI:29103"/>
    </cofactor>
    <text evidence="1">Binds 2 potassium ions per subunit.</text>
</comment>
<comment type="pathway">
    <text evidence="1">Amine and polyamine biosynthesis; betaine biosynthesis via choline pathway; betaine from betaine aldehyde: step 1/1.</text>
</comment>
<comment type="subunit">
    <text evidence="1">Dimer of dimers.</text>
</comment>
<comment type="similarity">
    <text evidence="1">Belongs to the aldehyde dehydrogenase family.</text>
</comment>
<proteinExistence type="inferred from homology"/>
<evidence type="ECO:0000255" key="1">
    <source>
        <dbReference type="HAMAP-Rule" id="MF_00804"/>
    </source>
</evidence>
<organism>
    <name type="scientific">Burkholderia mallei (strain NCTC 10247)</name>
    <dbReference type="NCBI Taxonomy" id="320389"/>
    <lineage>
        <taxon>Bacteria</taxon>
        <taxon>Pseudomonadati</taxon>
        <taxon>Pseudomonadota</taxon>
        <taxon>Betaproteobacteria</taxon>
        <taxon>Burkholderiales</taxon>
        <taxon>Burkholderiaceae</taxon>
        <taxon>Burkholderia</taxon>
        <taxon>pseudomallei group</taxon>
    </lineage>
</organism>
<feature type="chain" id="PRO_1000047034" description="Betaine aldehyde dehydrogenase">
    <location>
        <begin position="1"/>
        <end position="489"/>
    </location>
</feature>
<feature type="active site" description="Charge relay system" evidence="1">
    <location>
        <position position="162"/>
    </location>
</feature>
<feature type="active site" description="Proton acceptor" evidence="1">
    <location>
        <position position="251"/>
    </location>
</feature>
<feature type="active site" description="Nucleophile" evidence="1">
    <location>
        <position position="285"/>
    </location>
</feature>
<feature type="active site" description="Charge relay system" evidence="1">
    <location>
        <position position="463"/>
    </location>
</feature>
<feature type="binding site" evidence="1">
    <location>
        <position position="26"/>
    </location>
    <ligand>
        <name>K(+)</name>
        <dbReference type="ChEBI" id="CHEBI:29103"/>
        <label>1</label>
    </ligand>
</feature>
<feature type="binding site" evidence="1">
    <location>
        <position position="93"/>
    </location>
    <ligand>
        <name>K(+)</name>
        <dbReference type="ChEBI" id="CHEBI:29103"/>
        <label>1</label>
    </ligand>
</feature>
<feature type="binding site" evidence="1">
    <location>
        <begin position="150"/>
        <end position="152"/>
    </location>
    <ligand>
        <name>NAD(+)</name>
        <dbReference type="ChEBI" id="CHEBI:57540"/>
    </ligand>
</feature>
<feature type="binding site" evidence="1">
    <location>
        <begin position="176"/>
        <end position="179"/>
    </location>
    <ligand>
        <name>NAD(+)</name>
        <dbReference type="ChEBI" id="CHEBI:57540"/>
    </ligand>
</feature>
<feature type="binding site" evidence="1">
    <location>
        <position position="180"/>
    </location>
    <ligand>
        <name>K(+)</name>
        <dbReference type="ChEBI" id="CHEBI:29103"/>
        <label>1</label>
    </ligand>
</feature>
<feature type="binding site" evidence="1">
    <location>
        <begin position="229"/>
        <end position="232"/>
    </location>
    <ligand>
        <name>NAD(+)</name>
        <dbReference type="ChEBI" id="CHEBI:57540"/>
    </ligand>
</feature>
<feature type="binding site" evidence="1">
    <location>
        <position position="245"/>
    </location>
    <ligand>
        <name>K(+)</name>
        <dbReference type="ChEBI" id="CHEBI:29103"/>
        <label>2</label>
    </ligand>
</feature>
<feature type="binding site" evidence="1">
    <location>
        <position position="253"/>
    </location>
    <ligand>
        <name>NAD(+)</name>
        <dbReference type="ChEBI" id="CHEBI:57540"/>
    </ligand>
</feature>
<feature type="binding site" description="covalent" evidence="1">
    <location>
        <position position="285"/>
    </location>
    <ligand>
        <name>NAD(+)</name>
        <dbReference type="ChEBI" id="CHEBI:57540"/>
    </ligand>
</feature>
<feature type="binding site" evidence="1">
    <location>
        <position position="386"/>
    </location>
    <ligand>
        <name>NAD(+)</name>
        <dbReference type="ChEBI" id="CHEBI:57540"/>
    </ligand>
</feature>
<feature type="binding site" evidence="1">
    <location>
        <position position="456"/>
    </location>
    <ligand>
        <name>K(+)</name>
        <dbReference type="ChEBI" id="CHEBI:29103"/>
        <label>2</label>
    </ligand>
</feature>
<feature type="binding site" evidence="1">
    <location>
        <position position="459"/>
    </location>
    <ligand>
        <name>K(+)</name>
        <dbReference type="ChEBI" id="CHEBI:29103"/>
        <label>2</label>
    </ligand>
</feature>
<feature type="site" description="Seems to be a necessary countercharge to the potassium cations" evidence="1">
    <location>
        <position position="247"/>
    </location>
</feature>
<feature type="modified residue" description="Cysteine sulfenic acid (-SOH)" evidence="1">
    <location>
        <position position="285"/>
    </location>
</feature>
<reference key="1">
    <citation type="journal article" date="2010" name="Genome Biol. Evol.">
        <title>Continuing evolution of Burkholderia mallei through genome reduction and large-scale rearrangements.</title>
        <authorList>
            <person name="Losada L."/>
            <person name="Ronning C.M."/>
            <person name="DeShazer D."/>
            <person name="Woods D."/>
            <person name="Fedorova N."/>
            <person name="Kim H.S."/>
            <person name="Shabalina S.A."/>
            <person name="Pearson T.R."/>
            <person name="Brinkac L."/>
            <person name="Tan P."/>
            <person name="Nandi T."/>
            <person name="Crabtree J."/>
            <person name="Badger J."/>
            <person name="Beckstrom-Sternberg S."/>
            <person name="Saqib M."/>
            <person name="Schutzer S.E."/>
            <person name="Keim P."/>
            <person name="Nierman W.C."/>
        </authorList>
    </citation>
    <scope>NUCLEOTIDE SEQUENCE [LARGE SCALE GENOMIC DNA]</scope>
    <source>
        <strain>NCTC 10247</strain>
    </source>
</reference>
<keyword id="KW-0479">Metal-binding</keyword>
<keyword id="KW-0520">NAD</keyword>
<keyword id="KW-0521">NADP</keyword>
<keyword id="KW-0558">Oxidation</keyword>
<keyword id="KW-0560">Oxidoreductase</keyword>
<keyword id="KW-0630">Potassium</keyword>
<accession>A3MEC6</accession>
<gene>
    <name evidence="1" type="primary">betB</name>
    <name type="ordered locus">BMA10247_A1427</name>
</gene>
<dbReference type="EC" id="1.2.1.8" evidence="1"/>
<dbReference type="EMBL" id="CP000547">
    <property type="protein sequence ID" value="ABO03078.1"/>
    <property type="molecule type" value="Genomic_DNA"/>
</dbReference>
<dbReference type="RefSeq" id="WP_004187839.1">
    <property type="nucleotide sequence ID" value="NZ_CP007801.1"/>
</dbReference>
<dbReference type="SMR" id="A3MEC6"/>
<dbReference type="GeneID" id="92976421"/>
<dbReference type="KEGG" id="bmaz:BM44_4499"/>
<dbReference type="KEGG" id="bmn:BMA10247_A1427"/>
<dbReference type="PATRIC" id="fig|320389.8.peg.5139"/>
<dbReference type="UniPathway" id="UPA00529">
    <property type="reaction ID" value="UER00386"/>
</dbReference>
<dbReference type="GO" id="GO:0008802">
    <property type="term" value="F:betaine-aldehyde dehydrogenase (NAD+) activity"/>
    <property type="evidence" value="ECO:0007669"/>
    <property type="project" value="UniProtKB-UniRule"/>
</dbReference>
<dbReference type="GO" id="GO:0046872">
    <property type="term" value="F:metal ion binding"/>
    <property type="evidence" value="ECO:0007669"/>
    <property type="project" value="UniProtKB-KW"/>
</dbReference>
<dbReference type="GO" id="GO:0019285">
    <property type="term" value="P:glycine betaine biosynthetic process from choline"/>
    <property type="evidence" value="ECO:0007669"/>
    <property type="project" value="UniProtKB-UniRule"/>
</dbReference>
<dbReference type="CDD" id="cd07090">
    <property type="entry name" value="ALDH_F9_TMBADH"/>
    <property type="match status" value="1"/>
</dbReference>
<dbReference type="FunFam" id="3.40.309.10:FF:000014">
    <property type="entry name" value="NAD/NADP-dependent betaine aldehyde dehydrogenase"/>
    <property type="match status" value="1"/>
</dbReference>
<dbReference type="FunFam" id="3.40.605.10:FF:000007">
    <property type="entry name" value="NAD/NADP-dependent betaine aldehyde dehydrogenase"/>
    <property type="match status" value="1"/>
</dbReference>
<dbReference type="Gene3D" id="3.40.605.10">
    <property type="entry name" value="Aldehyde Dehydrogenase, Chain A, domain 1"/>
    <property type="match status" value="1"/>
</dbReference>
<dbReference type="Gene3D" id="3.40.309.10">
    <property type="entry name" value="Aldehyde Dehydrogenase, Chain A, domain 2"/>
    <property type="match status" value="1"/>
</dbReference>
<dbReference type="HAMAP" id="MF_00804">
    <property type="entry name" value="BADH"/>
    <property type="match status" value="1"/>
</dbReference>
<dbReference type="InterPro" id="IPR016161">
    <property type="entry name" value="Ald_DH/histidinol_DH"/>
</dbReference>
<dbReference type="InterPro" id="IPR016163">
    <property type="entry name" value="Ald_DH_C"/>
</dbReference>
<dbReference type="InterPro" id="IPR016160">
    <property type="entry name" value="Ald_DH_CS_CYS"/>
</dbReference>
<dbReference type="InterPro" id="IPR029510">
    <property type="entry name" value="Ald_DH_CS_GLU"/>
</dbReference>
<dbReference type="InterPro" id="IPR016162">
    <property type="entry name" value="Ald_DH_N"/>
</dbReference>
<dbReference type="InterPro" id="IPR015590">
    <property type="entry name" value="Aldehyde_DH_dom"/>
</dbReference>
<dbReference type="InterPro" id="IPR011264">
    <property type="entry name" value="BADH"/>
</dbReference>
<dbReference type="NCBIfam" id="TIGR01804">
    <property type="entry name" value="BADH"/>
    <property type="match status" value="1"/>
</dbReference>
<dbReference type="NCBIfam" id="NF009725">
    <property type="entry name" value="PRK13252.1"/>
    <property type="match status" value="1"/>
</dbReference>
<dbReference type="PANTHER" id="PTHR11699">
    <property type="entry name" value="ALDEHYDE DEHYDROGENASE-RELATED"/>
    <property type="match status" value="1"/>
</dbReference>
<dbReference type="Pfam" id="PF00171">
    <property type="entry name" value="Aldedh"/>
    <property type="match status" value="1"/>
</dbReference>
<dbReference type="SUPFAM" id="SSF53720">
    <property type="entry name" value="ALDH-like"/>
    <property type="match status" value="1"/>
</dbReference>
<dbReference type="PROSITE" id="PS00070">
    <property type="entry name" value="ALDEHYDE_DEHYDR_CYS"/>
    <property type="match status" value="1"/>
</dbReference>
<dbReference type="PROSITE" id="PS00687">
    <property type="entry name" value="ALDEHYDE_DEHYDR_GLU"/>
    <property type="match status" value="1"/>
</dbReference>